<reference key="1">
    <citation type="journal article" date="2009" name="PLoS ONE">
        <title>Complete genome sequence of Francisella tularensis subspecies holarctica FTNF002-00.</title>
        <authorList>
            <person name="Barabote R.D."/>
            <person name="Xie G."/>
            <person name="Brettin T.S."/>
            <person name="Hinrichs S.H."/>
            <person name="Fey P.D."/>
            <person name="Jay J.J."/>
            <person name="Engle J.L."/>
            <person name="Godbole S.D."/>
            <person name="Noronha J.M."/>
            <person name="Scheuermann R.H."/>
            <person name="Zhou L.W."/>
            <person name="Lion C."/>
            <person name="Dempsey M.P."/>
        </authorList>
    </citation>
    <scope>NUCLEOTIDE SEQUENCE [LARGE SCALE GENOMIC DNA]</scope>
    <source>
        <strain>FTNF002-00 / FTA</strain>
    </source>
</reference>
<evidence type="ECO:0000255" key="1">
    <source>
        <dbReference type="HAMAP-Rule" id="MF_01151"/>
    </source>
</evidence>
<sequence>MSKQEKSNVEDKSLDIETAAQVETAQESASGALEELSVEEQLERAKDTIKELEDSCDQFKDEALRAKAEMENIRKRAERDVSNARKFGIEKFAKELLPVIDSIEQALKHEVKLEEAIAMKEGIELTAKMLVDILKKNGVEELDPKGEKFDPNLHEAMAMIPNPEFEDNTIFDVFQKGYMLNGRIVRAAKVVIVKN</sequence>
<feature type="chain" id="PRO_1000053580" description="Protein GrpE">
    <location>
        <begin position="1"/>
        <end position="195"/>
    </location>
</feature>
<gene>
    <name evidence="1" type="primary">grpE</name>
    <name type="ordered locus">FTA_1256</name>
</gene>
<accession>A7NCM8</accession>
<proteinExistence type="inferred from homology"/>
<dbReference type="EMBL" id="CP000803">
    <property type="protein sequence ID" value="ABU61731.1"/>
    <property type="molecule type" value="Genomic_DNA"/>
</dbReference>
<dbReference type="RefSeq" id="WP_003037086.1">
    <property type="nucleotide sequence ID" value="NC_009749.1"/>
</dbReference>
<dbReference type="SMR" id="A7NCM8"/>
<dbReference type="GeneID" id="75264983"/>
<dbReference type="KEGG" id="fta:FTA_1256"/>
<dbReference type="HOGENOM" id="CLU_057217_6_0_6"/>
<dbReference type="GO" id="GO:0005829">
    <property type="term" value="C:cytosol"/>
    <property type="evidence" value="ECO:0007669"/>
    <property type="project" value="TreeGrafter"/>
</dbReference>
<dbReference type="GO" id="GO:0000774">
    <property type="term" value="F:adenyl-nucleotide exchange factor activity"/>
    <property type="evidence" value="ECO:0007669"/>
    <property type="project" value="InterPro"/>
</dbReference>
<dbReference type="GO" id="GO:0042803">
    <property type="term" value="F:protein homodimerization activity"/>
    <property type="evidence" value="ECO:0007669"/>
    <property type="project" value="InterPro"/>
</dbReference>
<dbReference type="GO" id="GO:0051087">
    <property type="term" value="F:protein-folding chaperone binding"/>
    <property type="evidence" value="ECO:0007669"/>
    <property type="project" value="InterPro"/>
</dbReference>
<dbReference type="GO" id="GO:0051082">
    <property type="term" value="F:unfolded protein binding"/>
    <property type="evidence" value="ECO:0007669"/>
    <property type="project" value="TreeGrafter"/>
</dbReference>
<dbReference type="GO" id="GO:0006457">
    <property type="term" value="P:protein folding"/>
    <property type="evidence" value="ECO:0007669"/>
    <property type="project" value="InterPro"/>
</dbReference>
<dbReference type="CDD" id="cd00446">
    <property type="entry name" value="GrpE"/>
    <property type="match status" value="1"/>
</dbReference>
<dbReference type="FunFam" id="2.30.22.10:FF:000001">
    <property type="entry name" value="Protein GrpE"/>
    <property type="match status" value="1"/>
</dbReference>
<dbReference type="Gene3D" id="3.90.20.20">
    <property type="match status" value="1"/>
</dbReference>
<dbReference type="Gene3D" id="2.30.22.10">
    <property type="entry name" value="Head domain of nucleotide exchange factor GrpE"/>
    <property type="match status" value="1"/>
</dbReference>
<dbReference type="HAMAP" id="MF_01151">
    <property type="entry name" value="GrpE"/>
    <property type="match status" value="1"/>
</dbReference>
<dbReference type="InterPro" id="IPR000740">
    <property type="entry name" value="GrpE"/>
</dbReference>
<dbReference type="InterPro" id="IPR013805">
    <property type="entry name" value="GrpE_coiled_coil"/>
</dbReference>
<dbReference type="InterPro" id="IPR009012">
    <property type="entry name" value="GrpE_head"/>
</dbReference>
<dbReference type="NCBIfam" id="NF010737">
    <property type="entry name" value="PRK14139.1"/>
    <property type="match status" value="1"/>
</dbReference>
<dbReference type="NCBIfam" id="NF010738">
    <property type="entry name" value="PRK14140.1"/>
    <property type="match status" value="1"/>
</dbReference>
<dbReference type="NCBIfam" id="NF010746">
    <property type="entry name" value="PRK14148.1"/>
    <property type="match status" value="1"/>
</dbReference>
<dbReference type="NCBIfam" id="NF010748">
    <property type="entry name" value="PRK14150.1"/>
    <property type="match status" value="1"/>
</dbReference>
<dbReference type="PANTHER" id="PTHR21237">
    <property type="entry name" value="GRPE PROTEIN"/>
    <property type="match status" value="1"/>
</dbReference>
<dbReference type="PANTHER" id="PTHR21237:SF23">
    <property type="entry name" value="GRPE PROTEIN HOMOLOG, MITOCHONDRIAL"/>
    <property type="match status" value="1"/>
</dbReference>
<dbReference type="Pfam" id="PF01025">
    <property type="entry name" value="GrpE"/>
    <property type="match status" value="1"/>
</dbReference>
<dbReference type="PRINTS" id="PR00773">
    <property type="entry name" value="GRPEPROTEIN"/>
</dbReference>
<dbReference type="SUPFAM" id="SSF58014">
    <property type="entry name" value="Coiled-coil domain of nucleotide exchange factor GrpE"/>
    <property type="match status" value="1"/>
</dbReference>
<dbReference type="SUPFAM" id="SSF51064">
    <property type="entry name" value="Head domain of nucleotide exchange factor GrpE"/>
    <property type="match status" value="1"/>
</dbReference>
<dbReference type="PROSITE" id="PS01071">
    <property type="entry name" value="GRPE"/>
    <property type="match status" value="1"/>
</dbReference>
<keyword id="KW-0143">Chaperone</keyword>
<keyword id="KW-0963">Cytoplasm</keyword>
<keyword id="KW-0346">Stress response</keyword>
<organism>
    <name type="scientific">Francisella tularensis subsp. holarctica (strain FTNF002-00 / FTA)</name>
    <dbReference type="NCBI Taxonomy" id="458234"/>
    <lineage>
        <taxon>Bacteria</taxon>
        <taxon>Pseudomonadati</taxon>
        <taxon>Pseudomonadota</taxon>
        <taxon>Gammaproteobacteria</taxon>
        <taxon>Thiotrichales</taxon>
        <taxon>Francisellaceae</taxon>
        <taxon>Francisella</taxon>
    </lineage>
</organism>
<protein>
    <recommendedName>
        <fullName evidence="1">Protein GrpE</fullName>
    </recommendedName>
    <alternativeName>
        <fullName evidence="1">HSP-70 cofactor</fullName>
    </alternativeName>
</protein>
<name>GRPE_FRATF</name>
<comment type="function">
    <text evidence="1">Participates actively in the response to hyperosmotic and heat shock by preventing the aggregation of stress-denatured proteins, in association with DnaK and GrpE. It is the nucleotide exchange factor for DnaK and may function as a thermosensor. Unfolded proteins bind initially to DnaJ; upon interaction with the DnaJ-bound protein, DnaK hydrolyzes its bound ATP, resulting in the formation of a stable complex. GrpE releases ADP from DnaK; ATP binding to DnaK triggers the release of the substrate protein, thus completing the reaction cycle. Several rounds of ATP-dependent interactions between DnaJ, DnaK and GrpE are required for fully efficient folding.</text>
</comment>
<comment type="subunit">
    <text evidence="1">Homodimer.</text>
</comment>
<comment type="subcellular location">
    <subcellularLocation>
        <location evidence="1">Cytoplasm</location>
    </subcellularLocation>
</comment>
<comment type="similarity">
    <text evidence="1">Belongs to the GrpE family.</text>
</comment>